<feature type="chain" id="PRO_0000374841" description="Ribosomal protein uS12 methylthiotransferase RimO">
    <location>
        <begin position="1"/>
        <end position="545"/>
    </location>
</feature>
<feature type="domain" description="MTTase N-terminal" evidence="1">
    <location>
        <begin position="7"/>
        <end position="129"/>
    </location>
</feature>
<feature type="domain" description="Radical SAM core" evidence="2">
    <location>
        <begin position="183"/>
        <end position="414"/>
    </location>
</feature>
<feature type="domain" description="TRAM" evidence="1">
    <location>
        <begin position="416"/>
        <end position="510"/>
    </location>
</feature>
<feature type="region of interest" description="Disordered" evidence="3">
    <location>
        <begin position="454"/>
        <end position="486"/>
    </location>
</feature>
<feature type="region of interest" description="Disordered" evidence="3">
    <location>
        <begin position="516"/>
        <end position="545"/>
    </location>
</feature>
<feature type="compositionally biased region" description="Low complexity" evidence="3">
    <location>
        <begin position="455"/>
        <end position="464"/>
    </location>
</feature>
<feature type="binding site" evidence="1">
    <location>
        <position position="16"/>
    </location>
    <ligand>
        <name>[4Fe-4S] cluster</name>
        <dbReference type="ChEBI" id="CHEBI:49883"/>
        <label>1</label>
    </ligand>
</feature>
<feature type="binding site" evidence="1">
    <location>
        <position position="52"/>
    </location>
    <ligand>
        <name>[4Fe-4S] cluster</name>
        <dbReference type="ChEBI" id="CHEBI:49883"/>
        <label>1</label>
    </ligand>
</feature>
<feature type="binding site" evidence="1">
    <location>
        <position position="92"/>
    </location>
    <ligand>
        <name>[4Fe-4S] cluster</name>
        <dbReference type="ChEBI" id="CHEBI:49883"/>
        <label>1</label>
    </ligand>
</feature>
<feature type="binding site" evidence="1">
    <location>
        <position position="197"/>
    </location>
    <ligand>
        <name>[4Fe-4S] cluster</name>
        <dbReference type="ChEBI" id="CHEBI:49883"/>
        <label>2</label>
        <note>4Fe-4S-S-AdoMet</note>
    </ligand>
</feature>
<feature type="binding site" evidence="1">
    <location>
        <position position="201"/>
    </location>
    <ligand>
        <name>[4Fe-4S] cluster</name>
        <dbReference type="ChEBI" id="CHEBI:49883"/>
        <label>2</label>
        <note>4Fe-4S-S-AdoMet</note>
    </ligand>
</feature>
<feature type="binding site" evidence="1">
    <location>
        <position position="204"/>
    </location>
    <ligand>
        <name>[4Fe-4S] cluster</name>
        <dbReference type="ChEBI" id="CHEBI:49883"/>
        <label>2</label>
        <note>4Fe-4S-S-AdoMet</note>
    </ligand>
</feature>
<gene>
    <name evidence="1" type="primary">rimO</name>
    <name type="ordered locus">FRAAL5734</name>
</gene>
<comment type="function">
    <text evidence="1">Catalyzes the methylthiolation of an aspartic acid residue of ribosomal protein uS12.</text>
</comment>
<comment type="catalytic activity">
    <reaction evidence="1">
        <text>L-aspartate(89)-[ribosomal protein uS12]-hydrogen + (sulfur carrier)-SH + AH2 + 2 S-adenosyl-L-methionine = 3-methylsulfanyl-L-aspartate(89)-[ribosomal protein uS12]-hydrogen + (sulfur carrier)-H + 5'-deoxyadenosine + L-methionine + A + S-adenosyl-L-homocysteine + 2 H(+)</text>
        <dbReference type="Rhea" id="RHEA:37087"/>
        <dbReference type="Rhea" id="RHEA-COMP:10460"/>
        <dbReference type="Rhea" id="RHEA-COMP:10461"/>
        <dbReference type="Rhea" id="RHEA-COMP:14737"/>
        <dbReference type="Rhea" id="RHEA-COMP:14739"/>
        <dbReference type="ChEBI" id="CHEBI:13193"/>
        <dbReference type="ChEBI" id="CHEBI:15378"/>
        <dbReference type="ChEBI" id="CHEBI:17319"/>
        <dbReference type="ChEBI" id="CHEBI:17499"/>
        <dbReference type="ChEBI" id="CHEBI:29917"/>
        <dbReference type="ChEBI" id="CHEBI:29961"/>
        <dbReference type="ChEBI" id="CHEBI:57844"/>
        <dbReference type="ChEBI" id="CHEBI:57856"/>
        <dbReference type="ChEBI" id="CHEBI:59789"/>
        <dbReference type="ChEBI" id="CHEBI:64428"/>
        <dbReference type="ChEBI" id="CHEBI:73599"/>
        <dbReference type="EC" id="2.8.4.4"/>
    </reaction>
</comment>
<comment type="cofactor">
    <cofactor evidence="1">
        <name>[4Fe-4S] cluster</name>
        <dbReference type="ChEBI" id="CHEBI:49883"/>
    </cofactor>
    <text evidence="1">Binds 2 [4Fe-4S] clusters. One cluster is coordinated with 3 cysteines and an exchangeable S-adenosyl-L-methionine.</text>
</comment>
<comment type="subcellular location">
    <subcellularLocation>
        <location evidence="1">Cytoplasm</location>
    </subcellularLocation>
</comment>
<comment type="similarity">
    <text evidence="1">Belongs to the methylthiotransferase family. RimO subfamily.</text>
</comment>
<name>RIMO_FRAAA</name>
<evidence type="ECO:0000255" key="1">
    <source>
        <dbReference type="HAMAP-Rule" id="MF_01865"/>
    </source>
</evidence>
<evidence type="ECO:0000255" key="2">
    <source>
        <dbReference type="PROSITE-ProRule" id="PRU01266"/>
    </source>
</evidence>
<evidence type="ECO:0000256" key="3">
    <source>
        <dbReference type="SAM" id="MobiDB-lite"/>
    </source>
</evidence>
<sequence length="545" mass="56118">MSTHVPRRVALVTLGCSRNEVDSEELAGRLAAQGWELVADAADADAVLVNTCGFVDAAKKDSIDALLAADDLRAGDGEPAGAGPRAVVAVGCLAERYGNELAASLPEADAVLGFDAYPSIGEHLDAVLGGATVPAHTPRDRRTLLPITPVERGASANVAVHVPGHARGVAGGSAAGSPGRRRLTAGPVAALKISSGCDRRCAFCAIPSFRGSHVSRPADDVLAEAEWLAGEGARELVLVSENSTSYGKDLGDLRALEKLLPQLAAVPGIVRVRTVYLQPAELRPSLLEVLLTTPGLAPYLDLSFQHASPAVLRRMRRFGGSEHFLDLLDRGRGLLPGLGARSNVIVGFPGETEADVDILAEFLEAAELDAVGVFGYSDEEGTEAVSLPGKIAEEEIERRRVQITDLVEQLTATRAQERIGSRVQVLVEEITDGIAAGCAGHQQPDADGSCLVRLPGPAGAAAGPPAGGPSGTGQPGLPGQPGQPGVEVGDLIEARVVATEGVDLVAEFTAVLDRARPSAGRGEAAPSATGARATVLVGRPRADGT</sequence>
<protein>
    <recommendedName>
        <fullName evidence="1">Ribosomal protein uS12 methylthiotransferase RimO</fullName>
        <shortName evidence="1">uS12 MTTase</shortName>
        <shortName evidence="1">uS12 methylthiotransferase</shortName>
        <ecNumber evidence="1">2.8.4.4</ecNumber>
    </recommendedName>
    <alternativeName>
        <fullName evidence="1">Ribosomal protein uS12 (aspartate-C(3))-methylthiotransferase</fullName>
    </alternativeName>
    <alternativeName>
        <fullName evidence="1">Ribosome maturation factor RimO</fullName>
    </alternativeName>
</protein>
<accession>Q0RDV0</accession>
<keyword id="KW-0004">4Fe-4S</keyword>
<keyword id="KW-0963">Cytoplasm</keyword>
<keyword id="KW-0408">Iron</keyword>
<keyword id="KW-0411">Iron-sulfur</keyword>
<keyword id="KW-0479">Metal-binding</keyword>
<keyword id="KW-1185">Reference proteome</keyword>
<keyword id="KW-0949">S-adenosyl-L-methionine</keyword>
<keyword id="KW-0808">Transferase</keyword>
<organism>
    <name type="scientific">Frankia alni (strain DSM 45986 / CECT 9034 / ACN14a)</name>
    <dbReference type="NCBI Taxonomy" id="326424"/>
    <lineage>
        <taxon>Bacteria</taxon>
        <taxon>Bacillati</taxon>
        <taxon>Actinomycetota</taxon>
        <taxon>Actinomycetes</taxon>
        <taxon>Frankiales</taxon>
        <taxon>Frankiaceae</taxon>
        <taxon>Frankia</taxon>
    </lineage>
</organism>
<proteinExistence type="inferred from homology"/>
<dbReference type="EC" id="2.8.4.4" evidence="1"/>
<dbReference type="EMBL" id="CT573213">
    <property type="protein sequence ID" value="CAJ64366.1"/>
    <property type="molecule type" value="Genomic_DNA"/>
</dbReference>
<dbReference type="RefSeq" id="WP_011606808.1">
    <property type="nucleotide sequence ID" value="NC_008278.1"/>
</dbReference>
<dbReference type="SMR" id="Q0RDV0"/>
<dbReference type="STRING" id="326424.FRAAL5734"/>
<dbReference type="KEGG" id="fal:FRAAL5734"/>
<dbReference type="eggNOG" id="COG0621">
    <property type="taxonomic scope" value="Bacteria"/>
</dbReference>
<dbReference type="HOGENOM" id="CLU_018697_0_1_11"/>
<dbReference type="OrthoDB" id="9805215at2"/>
<dbReference type="Proteomes" id="UP000000657">
    <property type="component" value="Chromosome"/>
</dbReference>
<dbReference type="GO" id="GO:0005829">
    <property type="term" value="C:cytosol"/>
    <property type="evidence" value="ECO:0007669"/>
    <property type="project" value="TreeGrafter"/>
</dbReference>
<dbReference type="GO" id="GO:0051539">
    <property type="term" value="F:4 iron, 4 sulfur cluster binding"/>
    <property type="evidence" value="ECO:0007669"/>
    <property type="project" value="UniProtKB-UniRule"/>
</dbReference>
<dbReference type="GO" id="GO:0035599">
    <property type="term" value="F:aspartic acid methylthiotransferase activity"/>
    <property type="evidence" value="ECO:0007669"/>
    <property type="project" value="TreeGrafter"/>
</dbReference>
<dbReference type="GO" id="GO:0046872">
    <property type="term" value="F:metal ion binding"/>
    <property type="evidence" value="ECO:0007669"/>
    <property type="project" value="UniProtKB-KW"/>
</dbReference>
<dbReference type="GO" id="GO:0103039">
    <property type="term" value="F:protein methylthiotransferase activity"/>
    <property type="evidence" value="ECO:0007669"/>
    <property type="project" value="UniProtKB-EC"/>
</dbReference>
<dbReference type="CDD" id="cd01335">
    <property type="entry name" value="Radical_SAM"/>
    <property type="match status" value="1"/>
</dbReference>
<dbReference type="FunFam" id="3.80.30.20:FF:000001">
    <property type="entry name" value="tRNA-2-methylthio-N(6)-dimethylallyladenosine synthase 2"/>
    <property type="match status" value="1"/>
</dbReference>
<dbReference type="Gene3D" id="3.40.50.12160">
    <property type="entry name" value="Methylthiotransferase, N-terminal domain"/>
    <property type="match status" value="1"/>
</dbReference>
<dbReference type="Gene3D" id="2.40.50.140">
    <property type="entry name" value="Nucleic acid-binding proteins"/>
    <property type="match status" value="1"/>
</dbReference>
<dbReference type="Gene3D" id="3.80.30.20">
    <property type="entry name" value="tm_1862 like domain"/>
    <property type="match status" value="1"/>
</dbReference>
<dbReference type="HAMAP" id="MF_01865">
    <property type="entry name" value="MTTase_RimO"/>
    <property type="match status" value="1"/>
</dbReference>
<dbReference type="InterPro" id="IPR006638">
    <property type="entry name" value="Elp3/MiaA/NifB-like_rSAM"/>
</dbReference>
<dbReference type="InterPro" id="IPR020612">
    <property type="entry name" value="Methylthiotransferase_CS"/>
</dbReference>
<dbReference type="InterPro" id="IPR013848">
    <property type="entry name" value="Methylthiotransferase_N"/>
</dbReference>
<dbReference type="InterPro" id="IPR038135">
    <property type="entry name" value="Methylthiotransferase_N_sf"/>
</dbReference>
<dbReference type="InterPro" id="IPR012340">
    <property type="entry name" value="NA-bd_OB-fold"/>
</dbReference>
<dbReference type="InterPro" id="IPR005840">
    <property type="entry name" value="Ribosomal_uS12_MeSTrfase_RimO"/>
</dbReference>
<dbReference type="InterPro" id="IPR007197">
    <property type="entry name" value="rSAM"/>
</dbReference>
<dbReference type="InterPro" id="IPR023404">
    <property type="entry name" value="rSAM_horseshoe"/>
</dbReference>
<dbReference type="PANTHER" id="PTHR43837">
    <property type="entry name" value="RIBOSOMAL PROTEIN S12 METHYLTHIOTRANSFERASE RIMO"/>
    <property type="match status" value="1"/>
</dbReference>
<dbReference type="PANTHER" id="PTHR43837:SF1">
    <property type="entry name" value="RIBOSOMAL PROTEIN US12 METHYLTHIOTRANSFERASE RIMO"/>
    <property type="match status" value="1"/>
</dbReference>
<dbReference type="Pfam" id="PF04055">
    <property type="entry name" value="Radical_SAM"/>
    <property type="match status" value="1"/>
</dbReference>
<dbReference type="Pfam" id="PF00919">
    <property type="entry name" value="UPF0004"/>
    <property type="match status" value="1"/>
</dbReference>
<dbReference type="SFLD" id="SFLDG01082">
    <property type="entry name" value="B12-binding_domain_containing"/>
    <property type="match status" value="1"/>
</dbReference>
<dbReference type="SFLD" id="SFLDS00029">
    <property type="entry name" value="Radical_SAM"/>
    <property type="match status" value="1"/>
</dbReference>
<dbReference type="SFLD" id="SFLDF00274">
    <property type="entry name" value="ribosomal_protein_S12_methylth"/>
    <property type="match status" value="1"/>
</dbReference>
<dbReference type="SMART" id="SM00729">
    <property type="entry name" value="Elp3"/>
    <property type="match status" value="1"/>
</dbReference>
<dbReference type="SUPFAM" id="SSF102114">
    <property type="entry name" value="Radical SAM enzymes"/>
    <property type="match status" value="1"/>
</dbReference>
<dbReference type="PROSITE" id="PS51449">
    <property type="entry name" value="MTTASE_N"/>
    <property type="match status" value="1"/>
</dbReference>
<dbReference type="PROSITE" id="PS01278">
    <property type="entry name" value="MTTASE_RADICAL"/>
    <property type="match status" value="1"/>
</dbReference>
<dbReference type="PROSITE" id="PS51918">
    <property type="entry name" value="RADICAL_SAM"/>
    <property type="match status" value="1"/>
</dbReference>
<reference key="1">
    <citation type="journal article" date="2007" name="Genome Res.">
        <title>Genome characteristics of facultatively symbiotic Frankia sp. strains reflect host range and host plant biogeography.</title>
        <authorList>
            <person name="Normand P."/>
            <person name="Lapierre P."/>
            <person name="Tisa L.S."/>
            <person name="Gogarten J.P."/>
            <person name="Alloisio N."/>
            <person name="Bagnarol E."/>
            <person name="Bassi C.A."/>
            <person name="Berry A.M."/>
            <person name="Bickhart D.M."/>
            <person name="Choisne N."/>
            <person name="Couloux A."/>
            <person name="Cournoyer B."/>
            <person name="Cruveiller S."/>
            <person name="Daubin V."/>
            <person name="Demange N."/>
            <person name="Francino M.P."/>
            <person name="Goltsman E."/>
            <person name="Huang Y."/>
            <person name="Kopp O.R."/>
            <person name="Labarre L."/>
            <person name="Lapidus A."/>
            <person name="Lavire C."/>
            <person name="Marechal J."/>
            <person name="Martinez M."/>
            <person name="Mastronunzio J.E."/>
            <person name="Mullin B.C."/>
            <person name="Niemann J."/>
            <person name="Pujic P."/>
            <person name="Rawnsley T."/>
            <person name="Rouy Z."/>
            <person name="Schenowitz C."/>
            <person name="Sellstedt A."/>
            <person name="Tavares F."/>
            <person name="Tomkins J.P."/>
            <person name="Vallenet D."/>
            <person name="Valverde C."/>
            <person name="Wall L.G."/>
            <person name="Wang Y."/>
            <person name="Medigue C."/>
            <person name="Benson D.R."/>
        </authorList>
    </citation>
    <scope>NUCLEOTIDE SEQUENCE [LARGE SCALE GENOMIC DNA]</scope>
    <source>
        <strain>DSM 45986 / CECT 9034 / ACN14a</strain>
    </source>
</reference>